<comment type="function">
    <text evidence="1">The RecF protein is involved in DNA metabolism; it is required for DNA replication and normal SOS inducibility. RecF binds preferentially to single-stranded, linear DNA. It also seems to bind ATP.</text>
</comment>
<comment type="subcellular location">
    <subcellularLocation>
        <location evidence="1">Cytoplasm</location>
    </subcellularLocation>
</comment>
<comment type="similarity">
    <text evidence="1">Belongs to the RecF family.</text>
</comment>
<evidence type="ECO:0000255" key="1">
    <source>
        <dbReference type="HAMAP-Rule" id="MF_00365"/>
    </source>
</evidence>
<reference key="1">
    <citation type="submission" date="2008-05" db="EMBL/GenBank/DDBJ databases">
        <title>Complete sequence of chromosome of Geobacter lovleyi SZ.</title>
        <authorList>
            <consortium name="US DOE Joint Genome Institute"/>
            <person name="Lucas S."/>
            <person name="Copeland A."/>
            <person name="Lapidus A."/>
            <person name="Glavina del Rio T."/>
            <person name="Dalin E."/>
            <person name="Tice H."/>
            <person name="Bruce D."/>
            <person name="Goodwin L."/>
            <person name="Pitluck S."/>
            <person name="Chertkov O."/>
            <person name="Meincke L."/>
            <person name="Brettin T."/>
            <person name="Detter J.C."/>
            <person name="Han C."/>
            <person name="Tapia R."/>
            <person name="Kuske C.R."/>
            <person name="Schmutz J."/>
            <person name="Larimer F."/>
            <person name="Land M."/>
            <person name="Hauser L."/>
            <person name="Kyrpides N."/>
            <person name="Mikhailova N."/>
            <person name="Sung Y."/>
            <person name="Fletcher K.E."/>
            <person name="Ritalahti K.M."/>
            <person name="Loeffler F.E."/>
            <person name="Richardson P."/>
        </authorList>
    </citation>
    <scope>NUCLEOTIDE SEQUENCE [LARGE SCALE GENOMIC DNA]</scope>
    <source>
        <strain>ATCC BAA-1151 / DSM 17278 / SZ</strain>
    </source>
</reference>
<dbReference type="EMBL" id="CP001089">
    <property type="protein sequence ID" value="ACD93742.1"/>
    <property type="molecule type" value="Genomic_DNA"/>
</dbReference>
<dbReference type="SMR" id="B3E8N9"/>
<dbReference type="STRING" id="398767.Glov_0003"/>
<dbReference type="KEGG" id="glo:Glov_0003"/>
<dbReference type="eggNOG" id="COG1195">
    <property type="taxonomic scope" value="Bacteria"/>
</dbReference>
<dbReference type="HOGENOM" id="CLU_040267_0_1_7"/>
<dbReference type="OrthoDB" id="9803889at2"/>
<dbReference type="Proteomes" id="UP000002420">
    <property type="component" value="Chromosome"/>
</dbReference>
<dbReference type="GO" id="GO:0005737">
    <property type="term" value="C:cytoplasm"/>
    <property type="evidence" value="ECO:0007669"/>
    <property type="project" value="UniProtKB-SubCell"/>
</dbReference>
<dbReference type="GO" id="GO:0005524">
    <property type="term" value="F:ATP binding"/>
    <property type="evidence" value="ECO:0007669"/>
    <property type="project" value="UniProtKB-UniRule"/>
</dbReference>
<dbReference type="GO" id="GO:0003697">
    <property type="term" value="F:single-stranded DNA binding"/>
    <property type="evidence" value="ECO:0007669"/>
    <property type="project" value="UniProtKB-UniRule"/>
</dbReference>
<dbReference type="GO" id="GO:0006260">
    <property type="term" value="P:DNA replication"/>
    <property type="evidence" value="ECO:0007669"/>
    <property type="project" value="UniProtKB-UniRule"/>
</dbReference>
<dbReference type="GO" id="GO:0000731">
    <property type="term" value="P:DNA synthesis involved in DNA repair"/>
    <property type="evidence" value="ECO:0007669"/>
    <property type="project" value="TreeGrafter"/>
</dbReference>
<dbReference type="GO" id="GO:0006302">
    <property type="term" value="P:double-strand break repair"/>
    <property type="evidence" value="ECO:0007669"/>
    <property type="project" value="TreeGrafter"/>
</dbReference>
<dbReference type="GO" id="GO:0009432">
    <property type="term" value="P:SOS response"/>
    <property type="evidence" value="ECO:0007669"/>
    <property type="project" value="UniProtKB-UniRule"/>
</dbReference>
<dbReference type="Gene3D" id="3.40.50.300">
    <property type="entry name" value="P-loop containing nucleotide triphosphate hydrolases"/>
    <property type="match status" value="1"/>
</dbReference>
<dbReference type="Gene3D" id="1.20.1050.90">
    <property type="entry name" value="RecF/RecN/SMC, N-terminal domain"/>
    <property type="match status" value="1"/>
</dbReference>
<dbReference type="HAMAP" id="MF_00365">
    <property type="entry name" value="RecF"/>
    <property type="match status" value="1"/>
</dbReference>
<dbReference type="InterPro" id="IPR001238">
    <property type="entry name" value="DNA-binding_RecF"/>
</dbReference>
<dbReference type="InterPro" id="IPR018078">
    <property type="entry name" value="DNA-binding_RecF_CS"/>
</dbReference>
<dbReference type="InterPro" id="IPR027417">
    <property type="entry name" value="P-loop_NTPase"/>
</dbReference>
<dbReference type="InterPro" id="IPR003395">
    <property type="entry name" value="RecF/RecN/SMC_N"/>
</dbReference>
<dbReference type="InterPro" id="IPR042174">
    <property type="entry name" value="RecF_2"/>
</dbReference>
<dbReference type="NCBIfam" id="TIGR00611">
    <property type="entry name" value="recf"/>
    <property type="match status" value="1"/>
</dbReference>
<dbReference type="PANTHER" id="PTHR32182">
    <property type="entry name" value="DNA REPLICATION AND REPAIR PROTEIN RECF"/>
    <property type="match status" value="1"/>
</dbReference>
<dbReference type="PANTHER" id="PTHR32182:SF0">
    <property type="entry name" value="DNA REPLICATION AND REPAIR PROTEIN RECF"/>
    <property type="match status" value="1"/>
</dbReference>
<dbReference type="Pfam" id="PF02463">
    <property type="entry name" value="SMC_N"/>
    <property type="match status" value="1"/>
</dbReference>
<dbReference type="SUPFAM" id="SSF52540">
    <property type="entry name" value="P-loop containing nucleoside triphosphate hydrolases"/>
    <property type="match status" value="1"/>
</dbReference>
<dbReference type="PROSITE" id="PS00618">
    <property type="entry name" value="RECF_2"/>
    <property type="match status" value="1"/>
</dbReference>
<proteinExistence type="inferred from homology"/>
<protein>
    <recommendedName>
        <fullName evidence="1">DNA replication and repair protein RecF</fullName>
    </recommendedName>
</protein>
<organism>
    <name type="scientific">Trichlorobacter lovleyi (strain ATCC BAA-1151 / DSM 17278 / SZ)</name>
    <name type="common">Geobacter lovleyi</name>
    <dbReference type="NCBI Taxonomy" id="398767"/>
    <lineage>
        <taxon>Bacteria</taxon>
        <taxon>Pseudomonadati</taxon>
        <taxon>Thermodesulfobacteriota</taxon>
        <taxon>Desulfuromonadia</taxon>
        <taxon>Geobacterales</taxon>
        <taxon>Geobacteraceae</taxon>
        <taxon>Trichlorobacter</taxon>
    </lineage>
</organism>
<sequence length="368" mass="41949">MFLKQVWLEQYRNIQKACIQPARHLTVLYGRNGQGKTNFLESLYLLGNARPFRAAKVPDLISHGSRSAAVRGLVLAAGVESTIVLHVENSTRRVTIDDKAVHRAADLHGKLAVVVFSPDDTAMVKLGPETRRRYLDRSLYASDAAFLSDYHTYYRILKQRNALLKTNQQAGLDLWTEQLATAGIRLMQHRQHYTSRLNQLLQQKYQQIAGEQEKVSVVYQPDVICTAEENGTELLLNVFRNQHEQDLRYKSTGRGPHRDDLLFSIGDRPLKSFGSQGQQRSFVLALKMAELDHLQETFGEMPLLLLDDIASELDRERMTNLLSYVRQREVQVLITTTDVTPFLPVLQQDSKLFRVEEGRLTYEGNGTP</sequence>
<gene>
    <name evidence="1" type="primary">recF</name>
    <name type="ordered locus">Glov_0003</name>
</gene>
<name>RECF_TRIL1</name>
<keyword id="KW-0067">ATP-binding</keyword>
<keyword id="KW-0963">Cytoplasm</keyword>
<keyword id="KW-0227">DNA damage</keyword>
<keyword id="KW-0234">DNA repair</keyword>
<keyword id="KW-0235">DNA replication</keyword>
<keyword id="KW-0238">DNA-binding</keyword>
<keyword id="KW-0547">Nucleotide-binding</keyword>
<keyword id="KW-1185">Reference proteome</keyword>
<keyword id="KW-0742">SOS response</keyword>
<feature type="chain" id="PRO_1000121121" description="DNA replication and repair protein RecF">
    <location>
        <begin position="1"/>
        <end position="368"/>
    </location>
</feature>
<feature type="binding site" evidence="1">
    <location>
        <begin position="30"/>
        <end position="37"/>
    </location>
    <ligand>
        <name>ATP</name>
        <dbReference type="ChEBI" id="CHEBI:30616"/>
    </ligand>
</feature>
<accession>B3E8N9</accession>